<organism>
    <name type="scientific">Escherichia coli O6:H1 (strain CFT073 / ATCC 700928 / UPEC)</name>
    <dbReference type="NCBI Taxonomy" id="199310"/>
    <lineage>
        <taxon>Bacteria</taxon>
        <taxon>Pseudomonadati</taxon>
        <taxon>Pseudomonadota</taxon>
        <taxon>Gammaproteobacteria</taxon>
        <taxon>Enterobacterales</taxon>
        <taxon>Enterobacteriaceae</taxon>
        <taxon>Escherichia</taxon>
    </lineage>
</organism>
<feature type="chain" id="PRO_0000097387" description="Regulator of nucleoside diphosphate kinase">
    <location>
        <begin position="1"/>
        <end position="136"/>
    </location>
</feature>
<dbReference type="EMBL" id="AE014075">
    <property type="protein sequence ID" value="AAN79173.1"/>
    <property type="molecule type" value="Genomic_DNA"/>
</dbReference>
<dbReference type="RefSeq" id="WP_000089731.1">
    <property type="nucleotide sequence ID" value="NZ_CP051263.1"/>
</dbReference>
<dbReference type="SMR" id="P0AFW5"/>
<dbReference type="STRING" id="199310.c0698"/>
<dbReference type="GeneID" id="93776875"/>
<dbReference type="KEGG" id="ecc:c0698"/>
<dbReference type="eggNOG" id="COG0782">
    <property type="taxonomic scope" value="Bacteria"/>
</dbReference>
<dbReference type="HOGENOM" id="CLU_120358_1_1_6"/>
<dbReference type="BioCyc" id="ECOL199310:C0698-MONOMER"/>
<dbReference type="Proteomes" id="UP000001410">
    <property type="component" value="Chromosome"/>
</dbReference>
<dbReference type="GO" id="GO:0003677">
    <property type="term" value="F:DNA binding"/>
    <property type="evidence" value="ECO:0007669"/>
    <property type="project" value="InterPro"/>
</dbReference>
<dbReference type="GO" id="GO:0070063">
    <property type="term" value="F:RNA polymerase binding"/>
    <property type="evidence" value="ECO:0007669"/>
    <property type="project" value="InterPro"/>
</dbReference>
<dbReference type="GO" id="GO:0006354">
    <property type="term" value="P:DNA-templated transcription elongation"/>
    <property type="evidence" value="ECO:0007669"/>
    <property type="project" value="TreeGrafter"/>
</dbReference>
<dbReference type="GO" id="GO:0032784">
    <property type="term" value="P:regulation of DNA-templated transcription elongation"/>
    <property type="evidence" value="ECO:0007669"/>
    <property type="project" value="InterPro"/>
</dbReference>
<dbReference type="FunFam" id="1.10.286.20:FF:000002">
    <property type="entry name" value="Regulator of nucleoside diphosphate kinase"/>
    <property type="match status" value="1"/>
</dbReference>
<dbReference type="FunFam" id="3.10.50.30:FF:000002">
    <property type="entry name" value="Regulator of nucleoside diphosphate kinase"/>
    <property type="match status" value="1"/>
</dbReference>
<dbReference type="Gene3D" id="1.10.286.20">
    <property type="match status" value="1"/>
</dbReference>
<dbReference type="Gene3D" id="3.10.50.30">
    <property type="entry name" value="Transcription elongation factor, GreA/GreB, C-terminal domain"/>
    <property type="match status" value="1"/>
</dbReference>
<dbReference type="HAMAP" id="MF_00954">
    <property type="entry name" value="Rnk"/>
    <property type="match status" value="1"/>
</dbReference>
<dbReference type="InterPro" id="IPR036953">
    <property type="entry name" value="GreA/GreB_C_sf"/>
</dbReference>
<dbReference type="InterPro" id="IPR028625">
    <property type="entry name" value="Rnk"/>
</dbReference>
<dbReference type="InterPro" id="IPR029462">
    <property type="entry name" value="Rnk_N"/>
</dbReference>
<dbReference type="InterPro" id="IPR001437">
    <property type="entry name" value="Tscrpt_elong_fac_GreA/B_C"/>
</dbReference>
<dbReference type="InterPro" id="IPR023459">
    <property type="entry name" value="Tscrpt_elong_fac_GreA/B_fam"/>
</dbReference>
<dbReference type="NCBIfam" id="NF004396">
    <property type="entry name" value="PRK05753.1"/>
    <property type="match status" value="1"/>
</dbReference>
<dbReference type="PANTHER" id="PTHR30437:SF5">
    <property type="entry name" value="REGULATOR OF NUCLEOSIDE DIPHOSPHATE KINASE"/>
    <property type="match status" value="1"/>
</dbReference>
<dbReference type="PANTHER" id="PTHR30437">
    <property type="entry name" value="TRANSCRIPTION ELONGATION FACTOR GREA"/>
    <property type="match status" value="1"/>
</dbReference>
<dbReference type="Pfam" id="PF01272">
    <property type="entry name" value="GreA_GreB"/>
    <property type="match status" value="1"/>
</dbReference>
<dbReference type="Pfam" id="PF14760">
    <property type="entry name" value="Rnk_N"/>
    <property type="match status" value="1"/>
</dbReference>
<dbReference type="SUPFAM" id="SSF54534">
    <property type="entry name" value="FKBP-like"/>
    <property type="match status" value="1"/>
</dbReference>
<proteinExistence type="inferred from homology"/>
<protein>
    <recommendedName>
        <fullName evidence="1">Regulator of nucleoside diphosphate kinase</fullName>
    </recommendedName>
</protein>
<gene>
    <name evidence="1" type="primary">rnk</name>
    <name type="ordered locus">c0698</name>
</gene>
<reference key="1">
    <citation type="journal article" date="2002" name="Proc. Natl. Acad. Sci. U.S.A.">
        <title>Extensive mosaic structure revealed by the complete genome sequence of uropathogenic Escherichia coli.</title>
        <authorList>
            <person name="Welch R.A."/>
            <person name="Burland V."/>
            <person name="Plunkett G. III"/>
            <person name="Redford P."/>
            <person name="Roesch P."/>
            <person name="Rasko D."/>
            <person name="Buckles E.L."/>
            <person name="Liou S.-R."/>
            <person name="Boutin A."/>
            <person name="Hackett J."/>
            <person name="Stroud D."/>
            <person name="Mayhew G.F."/>
            <person name="Rose D.J."/>
            <person name="Zhou S."/>
            <person name="Schwartz D.C."/>
            <person name="Perna N.T."/>
            <person name="Mobley H.L.T."/>
            <person name="Donnenberg M.S."/>
            <person name="Blattner F.R."/>
        </authorList>
    </citation>
    <scope>NUCLEOTIDE SEQUENCE [LARGE SCALE GENOMIC DNA]</scope>
    <source>
        <strain>CFT073 / ATCC 700928 / UPEC</strain>
    </source>
</reference>
<comment type="function">
    <text evidence="1">May act as an anti-Gre factor.</text>
</comment>
<comment type="subunit">
    <text evidence="1">Interacts with the RNA polymerase.</text>
</comment>
<comment type="similarity">
    <text evidence="1">Belongs to the Rnk family.</text>
</comment>
<name>RNK_ECOL6</name>
<sequence>MSRPTIIINDLDAERIDILLEQPAYAGLPIADALNAELDRAQMCSPEEMPHDVVTMNSRVKFRNLSDGEVRVRTLVYPAKMTDSNTQLSVMAPVGAALLGLRVGDSIHWELPGGVATHLEVLELEYQPEAAGDYLL</sequence>
<accession>P0AFW5</accession>
<accession>P40679</accession>
<evidence type="ECO:0000255" key="1">
    <source>
        <dbReference type="HAMAP-Rule" id="MF_00954"/>
    </source>
</evidence>
<keyword id="KW-1185">Reference proteome</keyword>